<feature type="chain" id="PRO_0000055094" description="Probable ATP-dependent RNA helicase DDX55 homolog">
    <location>
        <begin position="1"/>
        <end position="578"/>
    </location>
</feature>
<feature type="domain" description="Helicase ATP-binding" evidence="1">
    <location>
        <begin position="40"/>
        <end position="218"/>
    </location>
</feature>
<feature type="domain" description="Helicase C-terminal" evidence="2">
    <location>
        <begin position="231"/>
        <end position="393"/>
    </location>
</feature>
<feature type="region of interest" description="Disordered" evidence="3">
    <location>
        <begin position="507"/>
        <end position="557"/>
    </location>
</feature>
<feature type="short sequence motif" description="Q motif">
    <location>
        <begin position="7"/>
        <end position="37"/>
    </location>
</feature>
<feature type="short sequence motif" description="DEAD box">
    <location>
        <begin position="166"/>
        <end position="169"/>
    </location>
</feature>
<feature type="compositionally biased region" description="Basic residues" evidence="3">
    <location>
        <begin position="510"/>
        <end position="526"/>
    </location>
</feature>
<feature type="compositionally biased region" description="Basic and acidic residues" evidence="3">
    <location>
        <begin position="536"/>
        <end position="549"/>
    </location>
</feature>
<feature type="binding site" evidence="1">
    <location>
        <begin position="53"/>
        <end position="60"/>
    </location>
    <ligand>
        <name>ATP</name>
        <dbReference type="ChEBI" id="CHEBI:30616"/>
    </ligand>
</feature>
<sequence>MTSKVGPVALKTFREKLGPELLEVFDKSYKSFTDVQVLSGTHLLNLSDVVVESPTGSGKTLAFVLPMMRMIQNAKLQPADIGALILSPSRELCSQIVSVIQPFAEKLNLTVETVTGGQKVDKNIKMFKNKNVNILVATPGRLFQIIQHEKTLIARKMRTLQLLVIDEADRFNEIQFEDHMREILSCIPKQRRTGLFSATQVKEEDDLMVFGLRNAKQVKVAQERNSAAPSTLKNYYVECRADEKTSVCLEFIRQRTDKKILIFFPSCNSVRYFYKIFERCLGKRPLFAVHGKCSNPHRASQIKAFSDSTNGVMISTDVMARGIDISDIDWVIQFDLPKHSSWFVHRAGRTARCGREGNALILIASEQLAYVNFLDNHEKVKLDEIKVPTNNSRKSEELRQKMIKIQVSDRAILEAGTRAFVSHVESYAKHDCHLICSLDDLNVVGLANSYALLRLPKMRELSQRKDLDMFDRSAIETSEIKYADVKLEANRETVMKEKHEKKVETLAAKDKKRREKEARKLKKMGGRFRNGGGTGRKAEEKKALKRKAEEEDDAQNDIRLLKRIKRGKLSKKEIKDVL</sequence>
<comment type="function">
    <text>Probable ATP-binding RNA helicase.</text>
</comment>
<comment type="catalytic activity">
    <reaction>
        <text>ATP + H2O = ADP + phosphate + H(+)</text>
        <dbReference type="Rhea" id="RHEA:13065"/>
        <dbReference type="ChEBI" id="CHEBI:15377"/>
        <dbReference type="ChEBI" id="CHEBI:15378"/>
        <dbReference type="ChEBI" id="CHEBI:30616"/>
        <dbReference type="ChEBI" id="CHEBI:43474"/>
        <dbReference type="ChEBI" id="CHEBI:456216"/>
        <dbReference type="EC" id="3.6.4.13"/>
    </reaction>
</comment>
<comment type="domain">
    <text>The Q motif is unique to and characteristic of the DEAD box family of RNA helicases and controls ATP binding and hydrolysis.</text>
</comment>
<comment type="similarity">
    <text evidence="4">Belongs to the DEAD box helicase family. DDX55/SPB4 subfamily.</text>
</comment>
<reference key="1">
    <citation type="journal article" date="1994" name="Nature">
        <title>2.2 Mb of contiguous nucleotide sequence from chromosome III of C. elegans.</title>
        <authorList>
            <person name="Wilson R."/>
            <person name="Ainscough R."/>
            <person name="Anderson K."/>
            <person name="Baynes C."/>
            <person name="Berks M."/>
            <person name="Bonfield J."/>
            <person name="Burton J."/>
            <person name="Connell M."/>
            <person name="Copsey T."/>
            <person name="Cooper J."/>
            <person name="Coulson A."/>
            <person name="Craxton M."/>
            <person name="Dear S."/>
            <person name="Du Z."/>
            <person name="Durbin R."/>
            <person name="Favello A."/>
            <person name="Fraser A."/>
            <person name="Fulton L."/>
            <person name="Gardner A."/>
            <person name="Green P."/>
            <person name="Hawkins T."/>
            <person name="Hillier L."/>
            <person name="Jier M."/>
            <person name="Johnston L."/>
            <person name="Jones M."/>
            <person name="Kershaw J."/>
            <person name="Kirsten J."/>
            <person name="Laisster N."/>
            <person name="Latreille P."/>
            <person name="Lightning J."/>
            <person name="Lloyd C."/>
            <person name="Mortimore B."/>
            <person name="O'Callaghan M."/>
            <person name="Parsons J."/>
            <person name="Percy C."/>
            <person name="Rifken L."/>
            <person name="Roopra A."/>
            <person name="Saunders D."/>
            <person name="Shownkeen R."/>
            <person name="Sims M."/>
            <person name="Smaldon N."/>
            <person name="Smith A."/>
            <person name="Smith M."/>
            <person name="Sonnhammer E."/>
            <person name="Staden R."/>
            <person name="Sulston J."/>
            <person name="Thierry-Mieg J."/>
            <person name="Thomas K."/>
            <person name="Vaudin M."/>
            <person name="Vaughan K."/>
            <person name="Waterston R."/>
            <person name="Watson A."/>
            <person name="Weinstock L."/>
            <person name="Wilkinson-Sproat J."/>
            <person name="Wohldman P."/>
        </authorList>
    </citation>
    <scope>NUCLEOTIDE SEQUENCE [LARGE SCALE GENOMIC DNA]</scope>
    <source>
        <strain>Bristol N2</strain>
    </source>
</reference>
<reference key="2">
    <citation type="journal article" date="1998" name="Science">
        <title>Genome sequence of the nematode C. elegans: a platform for investigating biology.</title>
        <authorList>
            <consortium name="The C. elegans sequencing consortium"/>
        </authorList>
    </citation>
    <scope>NUCLEOTIDE SEQUENCE [LARGE SCALE GENOMIC DNA]</scope>
    <source>
        <strain>Bristol N2</strain>
    </source>
</reference>
<protein>
    <recommendedName>
        <fullName>Probable ATP-dependent RNA helicase DDX55 homolog</fullName>
        <ecNumber>3.6.4.13</ecNumber>
    </recommendedName>
    <alternativeName>
        <fullName>DEAD box protein 55</fullName>
    </alternativeName>
</protein>
<accession>P34640</accession>
<organism>
    <name type="scientific">Caenorhabditis elegans</name>
    <dbReference type="NCBI Taxonomy" id="6239"/>
    <lineage>
        <taxon>Eukaryota</taxon>
        <taxon>Metazoa</taxon>
        <taxon>Ecdysozoa</taxon>
        <taxon>Nematoda</taxon>
        <taxon>Chromadorea</taxon>
        <taxon>Rhabditida</taxon>
        <taxon>Rhabditina</taxon>
        <taxon>Rhabditomorpha</taxon>
        <taxon>Rhabditoidea</taxon>
        <taxon>Rhabditidae</taxon>
        <taxon>Peloderinae</taxon>
        <taxon>Caenorhabditis</taxon>
    </lineage>
</organism>
<keyword id="KW-0067">ATP-binding</keyword>
<keyword id="KW-0347">Helicase</keyword>
<keyword id="KW-0378">Hydrolase</keyword>
<keyword id="KW-0547">Nucleotide-binding</keyword>
<keyword id="KW-1185">Reference proteome</keyword>
<keyword id="KW-0694">RNA-binding</keyword>
<proteinExistence type="inferred from homology"/>
<name>DDX55_CAEEL</name>
<evidence type="ECO:0000255" key="1">
    <source>
        <dbReference type="PROSITE-ProRule" id="PRU00541"/>
    </source>
</evidence>
<evidence type="ECO:0000255" key="2">
    <source>
        <dbReference type="PROSITE-ProRule" id="PRU00542"/>
    </source>
</evidence>
<evidence type="ECO:0000256" key="3">
    <source>
        <dbReference type="SAM" id="MobiDB-lite"/>
    </source>
</evidence>
<evidence type="ECO:0000305" key="4"/>
<dbReference type="EC" id="3.6.4.13"/>
<dbReference type="EMBL" id="Z22177">
    <property type="protein sequence ID" value="CAA80151.1"/>
    <property type="molecule type" value="Genomic_DNA"/>
</dbReference>
<dbReference type="PIR" id="B88549">
    <property type="entry name" value="B88549"/>
</dbReference>
<dbReference type="PIR" id="S40763">
    <property type="entry name" value="S40763"/>
</dbReference>
<dbReference type="RefSeq" id="NP_001254980.1">
    <property type="nucleotide sequence ID" value="NM_001268051.2"/>
</dbReference>
<dbReference type="SMR" id="P34640"/>
<dbReference type="BioGRID" id="41491">
    <property type="interactions" value="2"/>
</dbReference>
<dbReference type="FunCoup" id="P34640">
    <property type="interactions" value="2975"/>
</dbReference>
<dbReference type="STRING" id="6239.ZK512.2a.1"/>
<dbReference type="PaxDb" id="6239-ZK512.2a"/>
<dbReference type="PeptideAtlas" id="P34640"/>
<dbReference type="EnsemblMetazoa" id="ZK512.2a.1">
    <property type="protein sequence ID" value="ZK512.2a.1"/>
    <property type="gene ID" value="WBGene00013983"/>
</dbReference>
<dbReference type="GeneID" id="176292"/>
<dbReference type="KEGG" id="cel:CELE_ZK512.2"/>
<dbReference type="UCSC" id="ZK512.2">
    <property type="organism name" value="c. elegans"/>
</dbReference>
<dbReference type="AGR" id="WB:WBGene00013983"/>
<dbReference type="CTD" id="176292"/>
<dbReference type="WormBase" id="ZK512.2a">
    <property type="protein sequence ID" value="CE03821"/>
    <property type="gene ID" value="WBGene00013983"/>
</dbReference>
<dbReference type="eggNOG" id="KOG0345">
    <property type="taxonomic scope" value="Eukaryota"/>
</dbReference>
<dbReference type="GeneTree" id="ENSGT00550000074969"/>
<dbReference type="HOGENOM" id="CLU_003041_26_4_1"/>
<dbReference type="InParanoid" id="P34640"/>
<dbReference type="OMA" id="IQFEDHM"/>
<dbReference type="OrthoDB" id="7396459at2759"/>
<dbReference type="PhylomeDB" id="P34640"/>
<dbReference type="PRO" id="PR:P34640"/>
<dbReference type="Proteomes" id="UP000001940">
    <property type="component" value="Chromosome III"/>
</dbReference>
<dbReference type="Bgee" id="WBGene00013983">
    <property type="expression patterns" value="Expressed in germ line (C elegans) and 4 other cell types or tissues"/>
</dbReference>
<dbReference type="ExpressionAtlas" id="P34640">
    <property type="expression patterns" value="baseline and differential"/>
</dbReference>
<dbReference type="GO" id="GO:0005730">
    <property type="term" value="C:nucleolus"/>
    <property type="evidence" value="ECO:0000318"/>
    <property type="project" value="GO_Central"/>
</dbReference>
<dbReference type="GO" id="GO:0043186">
    <property type="term" value="C:P granule"/>
    <property type="evidence" value="ECO:0007669"/>
    <property type="project" value="UniProtKB-ARBA"/>
</dbReference>
<dbReference type="GO" id="GO:0005524">
    <property type="term" value="F:ATP binding"/>
    <property type="evidence" value="ECO:0007669"/>
    <property type="project" value="UniProtKB-KW"/>
</dbReference>
<dbReference type="GO" id="GO:0016887">
    <property type="term" value="F:ATP hydrolysis activity"/>
    <property type="evidence" value="ECO:0007669"/>
    <property type="project" value="RHEA"/>
</dbReference>
<dbReference type="GO" id="GO:0003723">
    <property type="term" value="F:RNA binding"/>
    <property type="evidence" value="ECO:0007669"/>
    <property type="project" value="UniProtKB-KW"/>
</dbReference>
<dbReference type="GO" id="GO:0003724">
    <property type="term" value="F:RNA helicase activity"/>
    <property type="evidence" value="ECO:0007669"/>
    <property type="project" value="UniProtKB-EC"/>
</dbReference>
<dbReference type="CDD" id="cd17960">
    <property type="entry name" value="DEADc_DDX55"/>
    <property type="match status" value="1"/>
</dbReference>
<dbReference type="CDD" id="cd18787">
    <property type="entry name" value="SF2_C_DEAD"/>
    <property type="match status" value="1"/>
</dbReference>
<dbReference type="Gene3D" id="3.40.50.300">
    <property type="entry name" value="P-loop containing nucleotide triphosphate hydrolases"/>
    <property type="match status" value="2"/>
</dbReference>
<dbReference type="InterPro" id="IPR011545">
    <property type="entry name" value="DEAD/DEAH_box_helicase_dom"/>
</dbReference>
<dbReference type="InterPro" id="IPR014001">
    <property type="entry name" value="Helicase_ATP-bd"/>
</dbReference>
<dbReference type="InterPro" id="IPR001650">
    <property type="entry name" value="Helicase_C-like"/>
</dbReference>
<dbReference type="InterPro" id="IPR027417">
    <property type="entry name" value="P-loop_NTPase"/>
</dbReference>
<dbReference type="InterPro" id="IPR000629">
    <property type="entry name" value="RNA-helicase_DEAD-box_CS"/>
</dbReference>
<dbReference type="InterPro" id="IPR025313">
    <property type="entry name" value="SPB4-like_CTE"/>
</dbReference>
<dbReference type="PANTHER" id="PTHR24031">
    <property type="entry name" value="RNA HELICASE"/>
    <property type="match status" value="1"/>
</dbReference>
<dbReference type="Pfam" id="PF13959">
    <property type="entry name" value="CTE_SPB4"/>
    <property type="match status" value="1"/>
</dbReference>
<dbReference type="Pfam" id="PF00270">
    <property type="entry name" value="DEAD"/>
    <property type="match status" value="1"/>
</dbReference>
<dbReference type="Pfam" id="PF00271">
    <property type="entry name" value="Helicase_C"/>
    <property type="match status" value="1"/>
</dbReference>
<dbReference type="SMART" id="SM00487">
    <property type="entry name" value="DEXDc"/>
    <property type="match status" value="1"/>
</dbReference>
<dbReference type="SMART" id="SM01178">
    <property type="entry name" value="DUF4217"/>
    <property type="match status" value="1"/>
</dbReference>
<dbReference type="SMART" id="SM00490">
    <property type="entry name" value="HELICc"/>
    <property type="match status" value="1"/>
</dbReference>
<dbReference type="SUPFAM" id="SSF52540">
    <property type="entry name" value="P-loop containing nucleoside triphosphate hydrolases"/>
    <property type="match status" value="1"/>
</dbReference>
<dbReference type="PROSITE" id="PS00039">
    <property type="entry name" value="DEAD_ATP_HELICASE"/>
    <property type="match status" value="1"/>
</dbReference>
<dbReference type="PROSITE" id="PS51192">
    <property type="entry name" value="HELICASE_ATP_BIND_1"/>
    <property type="match status" value="1"/>
</dbReference>
<dbReference type="PROSITE" id="PS51194">
    <property type="entry name" value="HELICASE_CTER"/>
    <property type="match status" value="1"/>
</dbReference>
<gene>
    <name type="ORF">ZK512.2</name>
</gene>